<evidence type="ECO:0000305" key="1"/>
<organism>
    <name type="scientific">Invertebrate iridescent virus 3</name>
    <name type="common">IIV-3</name>
    <name type="synonym">Mosquito iridescent virus</name>
    <dbReference type="NCBI Taxonomy" id="345201"/>
    <lineage>
        <taxon>Viruses</taxon>
        <taxon>Varidnaviria</taxon>
        <taxon>Bamfordvirae</taxon>
        <taxon>Nucleocytoviricota</taxon>
        <taxon>Megaviricetes</taxon>
        <taxon>Pimascovirales</taxon>
        <taxon>Iridoviridae</taxon>
        <taxon>Betairidovirinae</taxon>
        <taxon>Chloriridovirus</taxon>
    </lineage>
</organism>
<proteinExistence type="inferred from homology"/>
<sequence>MTNLSRGLLLLEDEDFTLVENQAKTFHLSHTVSGKYSIVMFYTDTCPQCSVLKPIVLYFVGDPLLQICLVNVYDSDSQNIIPMSLKSTTPLEYVPFIVFYVNGLPFKIFDGESTLLNFKNFILQTIQEADQIPTDTAAQQSEIPSYTLGKPKSSKVCYLTYEKAY</sequence>
<accession>Q197E0</accession>
<organismHost>
    <name type="scientific">Aedes vexans</name>
    <name type="common">Inland floodwater mosquito</name>
    <name type="synonym">Culex vexans</name>
    <dbReference type="NCBI Taxonomy" id="7163"/>
</organismHost>
<organismHost>
    <name type="scientific">Culex territans</name>
    <dbReference type="NCBI Taxonomy" id="42431"/>
</organismHost>
<organismHost>
    <name type="scientific">Culiseta annulata</name>
    <dbReference type="NCBI Taxonomy" id="332058"/>
</organismHost>
<organismHost>
    <name type="scientific">Ochlerotatus sollicitans</name>
    <name type="common">eastern saltmarsh mosquito</name>
    <dbReference type="NCBI Taxonomy" id="310513"/>
</organismHost>
<organismHost>
    <name type="scientific">Ochlerotatus taeniorhynchus</name>
    <name type="common">Black salt marsh mosquito</name>
    <name type="synonym">Aedes taeniorhynchus</name>
    <dbReference type="NCBI Taxonomy" id="329105"/>
</organismHost>
<organismHost>
    <name type="scientific">Psorophora ferox</name>
    <dbReference type="NCBI Taxonomy" id="7183"/>
</organismHost>
<dbReference type="EMBL" id="DQ643392">
    <property type="protein sequence ID" value="ABF82050.1"/>
    <property type="molecule type" value="Genomic_DNA"/>
</dbReference>
<dbReference type="RefSeq" id="YP_654592.1">
    <property type="nucleotide sequence ID" value="NC_008187.1"/>
</dbReference>
<dbReference type="SMR" id="Q197E0"/>
<dbReference type="KEGG" id="vg:4156269"/>
<dbReference type="OrthoDB" id="17452at10239"/>
<dbReference type="Proteomes" id="UP000001358">
    <property type="component" value="Genome"/>
</dbReference>
<dbReference type="Gene3D" id="3.40.30.10">
    <property type="entry name" value="Glutaredoxin"/>
    <property type="match status" value="1"/>
</dbReference>
<dbReference type="InterPro" id="IPR036249">
    <property type="entry name" value="Thioredoxin-like_sf"/>
</dbReference>
<dbReference type="SUPFAM" id="SSF52833">
    <property type="entry name" value="Thioredoxin-like"/>
    <property type="match status" value="1"/>
</dbReference>
<reference key="1">
    <citation type="journal article" date="2006" name="J. Virol.">
        <title>Genome of invertebrate iridescent virus type 3 (mosquito iridescent virus).</title>
        <authorList>
            <person name="Delhon G."/>
            <person name="Tulman E.R."/>
            <person name="Afonso C.L."/>
            <person name="Lu Z."/>
            <person name="Becnel J.J."/>
            <person name="Moser B.A."/>
            <person name="Kutish G.F."/>
            <person name="Rock D.L."/>
        </authorList>
    </citation>
    <scope>NUCLEOTIDE SEQUENCE [LARGE SCALE GENOMIC DNA]</scope>
</reference>
<feature type="chain" id="PRO_0000377931" description="Uncharacterized protein 020R">
    <location>
        <begin position="1"/>
        <end position="165"/>
    </location>
</feature>
<comment type="similarity">
    <text evidence="1">Belongs to the IIV-6 196R family.</text>
</comment>
<protein>
    <recommendedName>
        <fullName>Uncharacterized protein 020R</fullName>
    </recommendedName>
</protein>
<name>VF196_IIV3</name>
<keyword id="KW-1185">Reference proteome</keyword>
<gene>
    <name type="ORF">IIV3-020R</name>
</gene>